<proteinExistence type="inferred from homology"/>
<organism>
    <name type="scientific">Burkholderia mallei (strain NCTC 10247)</name>
    <dbReference type="NCBI Taxonomy" id="320389"/>
    <lineage>
        <taxon>Bacteria</taxon>
        <taxon>Pseudomonadati</taxon>
        <taxon>Pseudomonadota</taxon>
        <taxon>Betaproteobacteria</taxon>
        <taxon>Burkholderiales</taxon>
        <taxon>Burkholderiaceae</taxon>
        <taxon>Burkholderia</taxon>
        <taxon>pseudomallei group</taxon>
    </lineage>
</organism>
<evidence type="ECO:0000255" key="1">
    <source>
        <dbReference type="HAMAP-Rule" id="MF_00127"/>
    </source>
</evidence>
<dbReference type="EC" id="6.1.1.21" evidence="1"/>
<dbReference type="EMBL" id="CP000548">
    <property type="protein sequence ID" value="ABO05938.1"/>
    <property type="molecule type" value="Genomic_DNA"/>
</dbReference>
<dbReference type="RefSeq" id="WP_004191559.1">
    <property type="nucleotide sequence ID" value="NZ_CP007802.1"/>
</dbReference>
<dbReference type="SMR" id="A3MK74"/>
<dbReference type="GeneID" id="92979077"/>
<dbReference type="KEGG" id="bmaz:BM44_1991"/>
<dbReference type="KEGG" id="bmn:BMA10247_1106"/>
<dbReference type="PATRIC" id="fig|320389.8.peg.2235"/>
<dbReference type="GO" id="GO:0005737">
    <property type="term" value="C:cytoplasm"/>
    <property type="evidence" value="ECO:0007669"/>
    <property type="project" value="UniProtKB-SubCell"/>
</dbReference>
<dbReference type="GO" id="GO:0005524">
    <property type="term" value="F:ATP binding"/>
    <property type="evidence" value="ECO:0007669"/>
    <property type="project" value="UniProtKB-UniRule"/>
</dbReference>
<dbReference type="GO" id="GO:0004821">
    <property type="term" value="F:histidine-tRNA ligase activity"/>
    <property type="evidence" value="ECO:0007669"/>
    <property type="project" value="UniProtKB-UniRule"/>
</dbReference>
<dbReference type="GO" id="GO:0006427">
    <property type="term" value="P:histidyl-tRNA aminoacylation"/>
    <property type="evidence" value="ECO:0007669"/>
    <property type="project" value="UniProtKB-UniRule"/>
</dbReference>
<dbReference type="CDD" id="cd00773">
    <property type="entry name" value="HisRS-like_core"/>
    <property type="match status" value="1"/>
</dbReference>
<dbReference type="CDD" id="cd00859">
    <property type="entry name" value="HisRS_anticodon"/>
    <property type="match status" value="1"/>
</dbReference>
<dbReference type="FunFam" id="3.30.930.10:FF:000005">
    <property type="entry name" value="Histidine--tRNA ligase"/>
    <property type="match status" value="1"/>
</dbReference>
<dbReference type="Gene3D" id="3.40.50.800">
    <property type="entry name" value="Anticodon-binding domain"/>
    <property type="match status" value="1"/>
</dbReference>
<dbReference type="Gene3D" id="3.30.930.10">
    <property type="entry name" value="Bira Bifunctional Protein, Domain 2"/>
    <property type="match status" value="1"/>
</dbReference>
<dbReference type="HAMAP" id="MF_00127">
    <property type="entry name" value="His_tRNA_synth"/>
    <property type="match status" value="1"/>
</dbReference>
<dbReference type="InterPro" id="IPR006195">
    <property type="entry name" value="aa-tRNA-synth_II"/>
</dbReference>
<dbReference type="InterPro" id="IPR045864">
    <property type="entry name" value="aa-tRNA-synth_II/BPL/LPL"/>
</dbReference>
<dbReference type="InterPro" id="IPR004154">
    <property type="entry name" value="Anticodon-bd"/>
</dbReference>
<dbReference type="InterPro" id="IPR036621">
    <property type="entry name" value="Anticodon-bd_dom_sf"/>
</dbReference>
<dbReference type="InterPro" id="IPR015807">
    <property type="entry name" value="His-tRNA-ligase"/>
</dbReference>
<dbReference type="InterPro" id="IPR041715">
    <property type="entry name" value="HisRS-like_core"/>
</dbReference>
<dbReference type="InterPro" id="IPR004516">
    <property type="entry name" value="HisRS/HisZ"/>
</dbReference>
<dbReference type="InterPro" id="IPR033656">
    <property type="entry name" value="HisRS_anticodon"/>
</dbReference>
<dbReference type="NCBIfam" id="TIGR00442">
    <property type="entry name" value="hisS"/>
    <property type="match status" value="1"/>
</dbReference>
<dbReference type="PANTHER" id="PTHR43707:SF1">
    <property type="entry name" value="HISTIDINE--TRNA LIGASE, MITOCHONDRIAL-RELATED"/>
    <property type="match status" value="1"/>
</dbReference>
<dbReference type="PANTHER" id="PTHR43707">
    <property type="entry name" value="HISTIDYL-TRNA SYNTHETASE"/>
    <property type="match status" value="1"/>
</dbReference>
<dbReference type="Pfam" id="PF03129">
    <property type="entry name" value="HGTP_anticodon"/>
    <property type="match status" value="1"/>
</dbReference>
<dbReference type="Pfam" id="PF13393">
    <property type="entry name" value="tRNA-synt_His"/>
    <property type="match status" value="1"/>
</dbReference>
<dbReference type="PIRSF" id="PIRSF001549">
    <property type="entry name" value="His-tRNA_synth"/>
    <property type="match status" value="1"/>
</dbReference>
<dbReference type="SUPFAM" id="SSF52954">
    <property type="entry name" value="Class II aaRS ABD-related"/>
    <property type="match status" value="1"/>
</dbReference>
<dbReference type="SUPFAM" id="SSF55681">
    <property type="entry name" value="Class II aaRS and biotin synthetases"/>
    <property type="match status" value="1"/>
</dbReference>
<dbReference type="PROSITE" id="PS50862">
    <property type="entry name" value="AA_TRNA_LIGASE_II"/>
    <property type="match status" value="1"/>
</dbReference>
<accession>A3MK74</accession>
<comment type="catalytic activity">
    <reaction evidence="1">
        <text>tRNA(His) + L-histidine + ATP = L-histidyl-tRNA(His) + AMP + diphosphate + H(+)</text>
        <dbReference type="Rhea" id="RHEA:17313"/>
        <dbReference type="Rhea" id="RHEA-COMP:9665"/>
        <dbReference type="Rhea" id="RHEA-COMP:9689"/>
        <dbReference type="ChEBI" id="CHEBI:15378"/>
        <dbReference type="ChEBI" id="CHEBI:30616"/>
        <dbReference type="ChEBI" id="CHEBI:33019"/>
        <dbReference type="ChEBI" id="CHEBI:57595"/>
        <dbReference type="ChEBI" id="CHEBI:78442"/>
        <dbReference type="ChEBI" id="CHEBI:78527"/>
        <dbReference type="ChEBI" id="CHEBI:456215"/>
        <dbReference type="EC" id="6.1.1.21"/>
    </reaction>
</comment>
<comment type="subunit">
    <text evidence="1">Homodimer.</text>
</comment>
<comment type="subcellular location">
    <subcellularLocation>
        <location evidence="1">Cytoplasm</location>
    </subcellularLocation>
</comment>
<comment type="similarity">
    <text evidence="1">Belongs to the class-II aminoacyl-tRNA synthetase family.</text>
</comment>
<name>SYH_BURM7</name>
<reference key="1">
    <citation type="journal article" date="2010" name="Genome Biol. Evol.">
        <title>Continuing evolution of Burkholderia mallei through genome reduction and large-scale rearrangements.</title>
        <authorList>
            <person name="Losada L."/>
            <person name="Ronning C.M."/>
            <person name="DeShazer D."/>
            <person name="Woods D."/>
            <person name="Fedorova N."/>
            <person name="Kim H.S."/>
            <person name="Shabalina S.A."/>
            <person name="Pearson T.R."/>
            <person name="Brinkac L."/>
            <person name="Tan P."/>
            <person name="Nandi T."/>
            <person name="Crabtree J."/>
            <person name="Badger J."/>
            <person name="Beckstrom-Sternberg S."/>
            <person name="Saqib M."/>
            <person name="Schutzer S.E."/>
            <person name="Keim P."/>
            <person name="Nierman W.C."/>
        </authorList>
    </citation>
    <scope>NUCLEOTIDE SEQUENCE [LARGE SCALE GENOMIC DNA]</scope>
    <source>
        <strain>NCTC 10247</strain>
    </source>
</reference>
<sequence>MTEQKRKLEKLTGVKGMNDILPQDAGLWEFFEATVKSLLRAYGYQNIRTPIVEHTQLFTRGIGEVTDIVEKEMYSFVDALNGENLTLRPENTAAVVRAAIEHNMLYDGPKRLWYLGPMFRHERPQRGRYRQFHQVGVEALGFAGPDADAEIIMMCQRLWDDLGLTGIKLEINSLGLAEERAAHRVELIKYLEQHVDKLDDDAQRRLYTNPLRVLDTKNPALQEIVRNAPQLIDFLGDVSRAHFDGLQQLLKANNLPFTINPRLVRGLDYYNLTVFEWVTDKLGAQGTVAAGGRYDPLIEQLGGKPTAACGWAMGVERILELLKEEHLVPEQEGVDVYVVHQGDAAREQAFIVAERLRDTGLDVILHCSADGAGASFKSQMKRADASGAAFAVIFGEDEVANGTVSVKPLRGTGAEGEKNVQQSVPVESLTEFLINAMVATAEDGDD</sequence>
<gene>
    <name evidence="1" type="primary">hisS</name>
    <name type="ordered locus">BMA10247_1106</name>
</gene>
<protein>
    <recommendedName>
        <fullName evidence="1">Histidine--tRNA ligase</fullName>
        <ecNumber evidence="1">6.1.1.21</ecNumber>
    </recommendedName>
    <alternativeName>
        <fullName evidence="1">Histidyl-tRNA synthetase</fullName>
        <shortName evidence="1">HisRS</shortName>
    </alternativeName>
</protein>
<keyword id="KW-0030">Aminoacyl-tRNA synthetase</keyword>
<keyword id="KW-0067">ATP-binding</keyword>
<keyword id="KW-0963">Cytoplasm</keyword>
<keyword id="KW-0436">Ligase</keyword>
<keyword id="KW-0547">Nucleotide-binding</keyword>
<keyword id="KW-0648">Protein biosynthesis</keyword>
<feature type="chain" id="PRO_1000016322" description="Histidine--tRNA ligase">
    <location>
        <begin position="1"/>
        <end position="446"/>
    </location>
</feature>